<proteinExistence type="inferred from homology"/>
<reference key="1">
    <citation type="journal article" date="2008" name="PLoS ONE">
        <title>Genome sequence of the saprophyte Leptospira biflexa provides insights into the evolution of Leptospira and the pathogenesis of leptospirosis.</title>
        <authorList>
            <person name="Picardeau M."/>
            <person name="Bulach D.M."/>
            <person name="Bouchier C."/>
            <person name="Zuerner R.L."/>
            <person name="Zidane N."/>
            <person name="Wilson P.J."/>
            <person name="Creno S."/>
            <person name="Kuczek E.S."/>
            <person name="Bommezzadri S."/>
            <person name="Davis J.C."/>
            <person name="McGrath A."/>
            <person name="Johnson M.J."/>
            <person name="Boursaux-Eude C."/>
            <person name="Seemann T."/>
            <person name="Rouy Z."/>
            <person name="Coppel R.L."/>
            <person name="Rood J.I."/>
            <person name="Lajus A."/>
            <person name="Davies J.K."/>
            <person name="Medigue C."/>
            <person name="Adler B."/>
        </authorList>
    </citation>
    <scope>NUCLEOTIDE SEQUENCE [LARGE SCALE GENOMIC DNA]</scope>
    <source>
        <strain>Patoc 1 / Ames</strain>
    </source>
</reference>
<keyword id="KW-0328">Glycosyltransferase</keyword>
<keyword id="KW-0479">Metal-binding</keyword>
<keyword id="KW-0671">Queuosine biosynthesis</keyword>
<keyword id="KW-0808">Transferase</keyword>
<keyword id="KW-0819">tRNA processing</keyword>
<keyword id="KW-0862">Zinc</keyword>
<organism>
    <name type="scientific">Leptospira biflexa serovar Patoc (strain Patoc 1 / Ames)</name>
    <dbReference type="NCBI Taxonomy" id="355278"/>
    <lineage>
        <taxon>Bacteria</taxon>
        <taxon>Pseudomonadati</taxon>
        <taxon>Spirochaetota</taxon>
        <taxon>Spirochaetia</taxon>
        <taxon>Leptospirales</taxon>
        <taxon>Leptospiraceae</taxon>
        <taxon>Leptospira</taxon>
    </lineage>
</organism>
<protein>
    <recommendedName>
        <fullName evidence="1">Queuine tRNA-ribosyltransferase</fullName>
        <ecNumber evidence="1">2.4.2.29</ecNumber>
    </recommendedName>
    <alternativeName>
        <fullName evidence="1">Guanine insertion enzyme</fullName>
    </alternativeName>
    <alternativeName>
        <fullName evidence="1">tRNA-guanine transglycosylase</fullName>
    </alternativeName>
</protein>
<accession>B0SCA8</accession>
<name>TGT_LEPBA</name>
<sequence length="371" mass="41980">MSSIFKEGIYDTGSYARTGTLDLNGIQIQTPIFMPVGTRGSIKSLTSEDIDELGYNLILANTYHLYLKPGKEVFDHFQGLKNFMSYKKALLTDSGGFQVFSLASLFKFEDDGVRFQSHIDGSHHKFTPASVIDMQRSIGSDIMMVLDDCAPYGSDTKRLELALDRTHRWAKESFAYWMENPGGQNVFPIVQGGVNETLRLRSLETLQKIDFPGIAIGGLSVGEPRPEYIRILECMAPHLDKSRPRYLMGVGTVVDILEGVKNGIDMFDCVLPTRNARNGQVFTSKGKINLRNESHRLSDSPIDPQCECKVCKTYSLGYIRHLHKVKELTAFSLSTYHNLFFMQSFMEKMRKSIEIGNFQGFYDHWKNLFGS</sequence>
<dbReference type="EC" id="2.4.2.29" evidence="1"/>
<dbReference type="EMBL" id="CP000777">
    <property type="protein sequence ID" value="ABZ94755.1"/>
    <property type="molecule type" value="Genomic_DNA"/>
</dbReference>
<dbReference type="RefSeq" id="WP_012389286.1">
    <property type="nucleotide sequence ID" value="NC_010842.1"/>
</dbReference>
<dbReference type="SMR" id="B0SCA8"/>
<dbReference type="KEGG" id="lbf:LBF_2262"/>
<dbReference type="HOGENOM" id="CLU_022060_0_1_12"/>
<dbReference type="UniPathway" id="UPA00392"/>
<dbReference type="GO" id="GO:0005829">
    <property type="term" value="C:cytosol"/>
    <property type="evidence" value="ECO:0007669"/>
    <property type="project" value="TreeGrafter"/>
</dbReference>
<dbReference type="GO" id="GO:0046872">
    <property type="term" value="F:metal ion binding"/>
    <property type="evidence" value="ECO:0007669"/>
    <property type="project" value="UniProtKB-KW"/>
</dbReference>
<dbReference type="GO" id="GO:0008479">
    <property type="term" value="F:tRNA-guanosine(34) queuine transglycosylase activity"/>
    <property type="evidence" value="ECO:0007669"/>
    <property type="project" value="UniProtKB-UniRule"/>
</dbReference>
<dbReference type="GO" id="GO:0008616">
    <property type="term" value="P:queuosine biosynthetic process"/>
    <property type="evidence" value="ECO:0007669"/>
    <property type="project" value="UniProtKB-UniRule"/>
</dbReference>
<dbReference type="GO" id="GO:0101030">
    <property type="term" value="P:tRNA-guanine transglycosylation"/>
    <property type="evidence" value="ECO:0007669"/>
    <property type="project" value="InterPro"/>
</dbReference>
<dbReference type="Gene3D" id="3.20.20.105">
    <property type="entry name" value="Queuine tRNA-ribosyltransferase-like"/>
    <property type="match status" value="1"/>
</dbReference>
<dbReference type="HAMAP" id="MF_00168">
    <property type="entry name" value="Q_tRNA_Tgt"/>
    <property type="match status" value="1"/>
</dbReference>
<dbReference type="InterPro" id="IPR004803">
    <property type="entry name" value="TGT"/>
</dbReference>
<dbReference type="InterPro" id="IPR036511">
    <property type="entry name" value="TGT-like_sf"/>
</dbReference>
<dbReference type="InterPro" id="IPR002616">
    <property type="entry name" value="tRNA_ribo_trans-like"/>
</dbReference>
<dbReference type="NCBIfam" id="TIGR00430">
    <property type="entry name" value="Q_tRNA_tgt"/>
    <property type="match status" value="1"/>
</dbReference>
<dbReference type="NCBIfam" id="TIGR00449">
    <property type="entry name" value="tgt_general"/>
    <property type="match status" value="1"/>
</dbReference>
<dbReference type="PANTHER" id="PTHR43530">
    <property type="entry name" value="QUEUINE TRNA-RIBOSYLTRANSFERASE CATALYTIC SUBUNIT 1"/>
    <property type="match status" value="1"/>
</dbReference>
<dbReference type="PANTHER" id="PTHR43530:SF1">
    <property type="entry name" value="QUEUINE TRNA-RIBOSYLTRANSFERASE CATALYTIC SUBUNIT 1"/>
    <property type="match status" value="1"/>
</dbReference>
<dbReference type="Pfam" id="PF01702">
    <property type="entry name" value="TGT"/>
    <property type="match status" value="1"/>
</dbReference>
<dbReference type="SUPFAM" id="SSF51713">
    <property type="entry name" value="tRNA-guanine transglycosylase"/>
    <property type="match status" value="1"/>
</dbReference>
<comment type="function">
    <text evidence="1">Catalyzes the base-exchange of a guanine (G) residue with the queuine precursor 7-aminomethyl-7-deazaguanine (PreQ1) at position 34 (anticodon wobble position) in tRNAs with GU(N) anticodons (tRNA-Asp, -Asn, -His and -Tyr). Catalysis occurs through a double-displacement mechanism. The nucleophile active site attacks the C1' of nucleotide 34 to detach the guanine base from the RNA, forming a covalent enzyme-RNA intermediate. The proton acceptor active site deprotonates the incoming PreQ1, allowing a nucleophilic attack on the C1' of the ribose to form the product. After dissociation, two additional enzymatic reactions on the tRNA convert PreQ1 to queuine (Q), resulting in the hypermodified nucleoside queuosine (7-(((4,5-cis-dihydroxy-2-cyclopenten-1-yl)amino)methyl)-7-deazaguanosine).</text>
</comment>
<comment type="catalytic activity">
    <reaction evidence="1">
        <text>7-aminomethyl-7-carbaguanine + guanosine(34) in tRNA = 7-aminomethyl-7-carbaguanosine(34) in tRNA + guanine</text>
        <dbReference type="Rhea" id="RHEA:24104"/>
        <dbReference type="Rhea" id="RHEA-COMP:10341"/>
        <dbReference type="Rhea" id="RHEA-COMP:10342"/>
        <dbReference type="ChEBI" id="CHEBI:16235"/>
        <dbReference type="ChEBI" id="CHEBI:58703"/>
        <dbReference type="ChEBI" id="CHEBI:74269"/>
        <dbReference type="ChEBI" id="CHEBI:82833"/>
        <dbReference type="EC" id="2.4.2.29"/>
    </reaction>
</comment>
<comment type="cofactor">
    <cofactor evidence="1">
        <name>Zn(2+)</name>
        <dbReference type="ChEBI" id="CHEBI:29105"/>
    </cofactor>
    <text evidence="1">Binds 1 zinc ion per subunit.</text>
</comment>
<comment type="pathway">
    <text evidence="1">tRNA modification; tRNA-queuosine biosynthesis.</text>
</comment>
<comment type="subunit">
    <text evidence="1">Homodimer. Within each dimer, one monomer is responsible for RNA recognition and catalysis, while the other monomer binds to the replacement base PreQ1.</text>
</comment>
<comment type="similarity">
    <text evidence="1">Belongs to the queuine tRNA-ribosyltransferase family.</text>
</comment>
<gene>
    <name evidence="1" type="primary">tgt</name>
    <name type="ordered locus">LBF_2262</name>
</gene>
<evidence type="ECO:0000255" key="1">
    <source>
        <dbReference type="HAMAP-Rule" id="MF_00168"/>
    </source>
</evidence>
<feature type="chain" id="PRO_1000198012" description="Queuine tRNA-ribosyltransferase">
    <location>
        <begin position="1"/>
        <end position="371"/>
    </location>
</feature>
<feature type="region of interest" description="RNA binding" evidence="1">
    <location>
        <begin position="249"/>
        <end position="255"/>
    </location>
</feature>
<feature type="region of interest" description="RNA binding; important for wobble base 34 recognition" evidence="1">
    <location>
        <begin position="273"/>
        <end position="277"/>
    </location>
</feature>
<feature type="active site" description="Proton acceptor" evidence="1">
    <location>
        <position position="93"/>
    </location>
</feature>
<feature type="active site" description="Nucleophile" evidence="1">
    <location>
        <position position="268"/>
    </location>
</feature>
<feature type="binding site" evidence="1">
    <location>
        <begin position="93"/>
        <end position="97"/>
    </location>
    <ligand>
        <name>substrate</name>
    </ligand>
</feature>
<feature type="binding site" evidence="1">
    <location>
        <position position="147"/>
    </location>
    <ligand>
        <name>substrate</name>
    </ligand>
</feature>
<feature type="binding site" evidence="1">
    <location>
        <position position="191"/>
    </location>
    <ligand>
        <name>substrate</name>
    </ligand>
</feature>
<feature type="binding site" evidence="1">
    <location>
        <position position="218"/>
    </location>
    <ligand>
        <name>substrate</name>
    </ligand>
</feature>
<feature type="binding site" evidence="1">
    <location>
        <position position="306"/>
    </location>
    <ligand>
        <name>Zn(2+)</name>
        <dbReference type="ChEBI" id="CHEBI:29105"/>
    </ligand>
</feature>
<feature type="binding site" evidence="1">
    <location>
        <position position="308"/>
    </location>
    <ligand>
        <name>Zn(2+)</name>
        <dbReference type="ChEBI" id="CHEBI:29105"/>
    </ligand>
</feature>
<feature type="binding site" evidence="1">
    <location>
        <position position="311"/>
    </location>
    <ligand>
        <name>Zn(2+)</name>
        <dbReference type="ChEBI" id="CHEBI:29105"/>
    </ligand>
</feature>
<feature type="binding site" evidence="1">
    <location>
        <position position="337"/>
    </location>
    <ligand>
        <name>Zn(2+)</name>
        <dbReference type="ChEBI" id="CHEBI:29105"/>
    </ligand>
</feature>